<name>ATPH_ATRBE</name>
<sequence>MNPLVFAASVIAAGLAVGLASIGPGVGQGTAAGQAVEGIARQPEAEGKIRGTLLLSLAFMEALTIYGLVVALALLFANPFV</sequence>
<keyword id="KW-0066">ATP synthesis</keyword>
<keyword id="KW-0138">CF(0)</keyword>
<keyword id="KW-0150">Chloroplast</keyword>
<keyword id="KW-0375">Hydrogen ion transport</keyword>
<keyword id="KW-0406">Ion transport</keyword>
<keyword id="KW-0446">Lipid-binding</keyword>
<keyword id="KW-0472">Membrane</keyword>
<keyword id="KW-0934">Plastid</keyword>
<keyword id="KW-0793">Thylakoid</keyword>
<keyword id="KW-0812">Transmembrane</keyword>
<keyword id="KW-1133">Transmembrane helix</keyword>
<keyword id="KW-0813">Transport</keyword>
<proteinExistence type="inferred from homology"/>
<geneLocation type="chloroplast"/>
<dbReference type="EMBL" id="AJ316582">
    <property type="protein sequence ID" value="CAC88031.1"/>
    <property type="molecule type" value="Genomic_DNA"/>
</dbReference>
<dbReference type="RefSeq" id="NP_783219.1">
    <property type="nucleotide sequence ID" value="NC_004561.1"/>
</dbReference>
<dbReference type="SMR" id="Q8RU61"/>
<dbReference type="GeneID" id="806523"/>
<dbReference type="GO" id="GO:0009535">
    <property type="term" value="C:chloroplast thylakoid membrane"/>
    <property type="evidence" value="ECO:0007669"/>
    <property type="project" value="UniProtKB-SubCell"/>
</dbReference>
<dbReference type="GO" id="GO:0045259">
    <property type="term" value="C:proton-transporting ATP synthase complex"/>
    <property type="evidence" value="ECO:0007669"/>
    <property type="project" value="UniProtKB-KW"/>
</dbReference>
<dbReference type="GO" id="GO:0033177">
    <property type="term" value="C:proton-transporting two-sector ATPase complex, proton-transporting domain"/>
    <property type="evidence" value="ECO:0007669"/>
    <property type="project" value="InterPro"/>
</dbReference>
<dbReference type="GO" id="GO:0008289">
    <property type="term" value="F:lipid binding"/>
    <property type="evidence" value="ECO:0007669"/>
    <property type="project" value="UniProtKB-KW"/>
</dbReference>
<dbReference type="GO" id="GO:0046933">
    <property type="term" value="F:proton-transporting ATP synthase activity, rotational mechanism"/>
    <property type="evidence" value="ECO:0007669"/>
    <property type="project" value="UniProtKB-UniRule"/>
</dbReference>
<dbReference type="CDD" id="cd18183">
    <property type="entry name" value="ATP-synt_Fo_c_ATPH"/>
    <property type="match status" value="1"/>
</dbReference>
<dbReference type="FunFam" id="1.20.20.10:FF:000001">
    <property type="entry name" value="ATP synthase subunit c, chloroplastic"/>
    <property type="match status" value="1"/>
</dbReference>
<dbReference type="Gene3D" id="1.20.20.10">
    <property type="entry name" value="F1F0 ATP synthase subunit C"/>
    <property type="match status" value="1"/>
</dbReference>
<dbReference type="HAMAP" id="MF_01396">
    <property type="entry name" value="ATP_synth_c_bact"/>
    <property type="match status" value="1"/>
</dbReference>
<dbReference type="InterPro" id="IPR005953">
    <property type="entry name" value="ATP_synth_csu_bac/chlpt"/>
</dbReference>
<dbReference type="InterPro" id="IPR000454">
    <property type="entry name" value="ATP_synth_F0_csu"/>
</dbReference>
<dbReference type="InterPro" id="IPR020537">
    <property type="entry name" value="ATP_synth_F0_csu_DDCD_BS"/>
</dbReference>
<dbReference type="InterPro" id="IPR038662">
    <property type="entry name" value="ATP_synth_F0_csu_sf"/>
</dbReference>
<dbReference type="InterPro" id="IPR002379">
    <property type="entry name" value="ATPase_proteolipid_c-like_dom"/>
</dbReference>
<dbReference type="InterPro" id="IPR035921">
    <property type="entry name" value="F/V-ATP_Csub_sf"/>
</dbReference>
<dbReference type="NCBIfam" id="TIGR01260">
    <property type="entry name" value="ATP_synt_c"/>
    <property type="match status" value="1"/>
</dbReference>
<dbReference type="NCBIfam" id="NF005608">
    <property type="entry name" value="PRK07354.1"/>
    <property type="match status" value="1"/>
</dbReference>
<dbReference type="PANTHER" id="PTHR10031">
    <property type="entry name" value="ATP SYNTHASE LIPID-BINDING PROTEIN, MITOCHONDRIAL"/>
    <property type="match status" value="1"/>
</dbReference>
<dbReference type="PANTHER" id="PTHR10031:SF0">
    <property type="entry name" value="ATPASE PROTEIN 9"/>
    <property type="match status" value="1"/>
</dbReference>
<dbReference type="Pfam" id="PF00137">
    <property type="entry name" value="ATP-synt_C"/>
    <property type="match status" value="1"/>
</dbReference>
<dbReference type="PRINTS" id="PR00124">
    <property type="entry name" value="ATPASEC"/>
</dbReference>
<dbReference type="SUPFAM" id="SSF81333">
    <property type="entry name" value="F1F0 ATP synthase subunit C"/>
    <property type="match status" value="1"/>
</dbReference>
<dbReference type="PROSITE" id="PS00605">
    <property type="entry name" value="ATPASE_C"/>
    <property type="match status" value="1"/>
</dbReference>
<organism>
    <name type="scientific">Atropa belladonna</name>
    <name type="common">Belladonna</name>
    <name type="synonym">Deadly nightshade</name>
    <dbReference type="NCBI Taxonomy" id="33113"/>
    <lineage>
        <taxon>Eukaryota</taxon>
        <taxon>Viridiplantae</taxon>
        <taxon>Streptophyta</taxon>
        <taxon>Embryophyta</taxon>
        <taxon>Tracheophyta</taxon>
        <taxon>Spermatophyta</taxon>
        <taxon>Magnoliopsida</taxon>
        <taxon>eudicotyledons</taxon>
        <taxon>Gunneridae</taxon>
        <taxon>Pentapetalae</taxon>
        <taxon>asterids</taxon>
        <taxon>lamiids</taxon>
        <taxon>Solanales</taxon>
        <taxon>Solanaceae</taxon>
        <taxon>Solanoideae</taxon>
        <taxon>Hyoscyameae</taxon>
        <taxon>Atropa</taxon>
    </lineage>
</organism>
<feature type="chain" id="PRO_0000362888" description="ATP synthase subunit c, chloroplastic">
    <location>
        <begin position="1"/>
        <end position="81"/>
    </location>
</feature>
<feature type="transmembrane region" description="Helical" evidence="1">
    <location>
        <begin position="3"/>
        <end position="23"/>
    </location>
</feature>
<feature type="transmembrane region" description="Helical" evidence="1">
    <location>
        <begin position="57"/>
        <end position="77"/>
    </location>
</feature>
<feature type="site" description="Reversibly protonated during proton transport" evidence="1">
    <location>
        <position position="61"/>
    </location>
</feature>
<evidence type="ECO:0000255" key="1">
    <source>
        <dbReference type="HAMAP-Rule" id="MF_01396"/>
    </source>
</evidence>
<comment type="function">
    <text evidence="1">F(1)F(0) ATP synthase produces ATP from ADP in the presence of a proton or sodium gradient. F-type ATPases consist of two structural domains, F(1) containing the extramembraneous catalytic core and F(0) containing the membrane proton channel, linked together by a central stalk and a peripheral stalk. During catalysis, ATP synthesis in the catalytic domain of F(1) is coupled via a rotary mechanism of the central stalk subunits to proton translocation.</text>
</comment>
<comment type="function">
    <text evidence="1">Key component of the F(0) channel; it plays a direct role in translocation across the membrane. A homomeric c-ring of between 10-14 subunits forms the central stalk rotor element with the F(1) delta and epsilon subunits.</text>
</comment>
<comment type="subunit">
    <text evidence="1">F-type ATPases have 2 components, F(1) - the catalytic core - and F(0) - the membrane proton channel. F(1) has five subunits: alpha(3), beta(3), gamma(1), delta(1), epsilon(1). F(0) has four main subunits: a(1), b(1), b'(1) and c(10-14). The alpha and beta chains form an alternating ring which encloses part of the gamma chain. F(1) is attached to F(0) by a central stalk formed by the gamma and epsilon chains, while a peripheral stalk is formed by the delta, b and b' chains.</text>
</comment>
<comment type="subcellular location">
    <subcellularLocation>
        <location evidence="1">Plastid</location>
        <location evidence="1">Chloroplast thylakoid membrane</location>
        <topology evidence="1">Multi-pass membrane protein</topology>
    </subcellularLocation>
</comment>
<comment type="miscellaneous">
    <text>In plastids the F-type ATPase is also known as CF(1)CF(0).</text>
</comment>
<comment type="similarity">
    <text evidence="1">Belongs to the ATPase C chain family.</text>
</comment>
<reference key="1">
    <citation type="journal article" date="2002" name="Mol. Biol. Evol.">
        <title>The plastid chromosome of Atropa belladonna and its comparison with that of Nicotiana tabacum: the role of RNA editing in generating divergence in the process of plant speciation.</title>
        <authorList>
            <person name="Schmitz-Linneweber C."/>
            <person name="Regel R."/>
            <person name="Du T.G."/>
            <person name="Hupfer H."/>
            <person name="Herrmann R.G."/>
            <person name="Maier R.M."/>
        </authorList>
    </citation>
    <scope>NUCLEOTIDE SEQUENCE [LARGE SCALE GENOMIC DNA]</scope>
    <source>
        <strain>cv. Ab5p(kan)</strain>
    </source>
</reference>
<protein>
    <recommendedName>
        <fullName evidence="1">ATP synthase subunit c, chloroplastic</fullName>
    </recommendedName>
    <alternativeName>
        <fullName evidence="1">ATP synthase F(0) sector subunit c</fullName>
    </alternativeName>
    <alternativeName>
        <fullName evidence="1">ATPase subunit III</fullName>
    </alternativeName>
    <alternativeName>
        <fullName evidence="1">F-type ATPase subunit c</fullName>
        <shortName evidence="1">F-ATPase subunit c</shortName>
    </alternativeName>
    <alternativeName>
        <fullName evidence="1">Lipid-binding protein</fullName>
    </alternativeName>
</protein>
<accession>Q8RU61</accession>
<gene>
    <name evidence="1" type="primary">atpH</name>
</gene>